<protein>
    <recommendedName>
        <fullName evidence="3">Large ribosomal subunit protein P2-2</fullName>
    </recommendedName>
    <alternativeName>
        <fullName>60S acidic ribosomal protein P2-2</fullName>
    </alternativeName>
</protein>
<sequence length="111" mass="10998">MSTKYLAAYALASLSKASPSQADVEAICKAVHIDVDQATLAFVMESVTGRDVATLIAEGAAKMSAMPAASSGAAAGVTASAAGDAAPAAAAAKKDEPEEEADDDMGFGLFD</sequence>
<name>RLA3_LEIIN</name>
<proteinExistence type="evidence at transcript level"/>
<keyword id="KW-0597">Phosphoprotein</keyword>
<keyword id="KW-0687">Ribonucleoprotein</keyword>
<keyword id="KW-0689">Ribosomal protein</keyword>
<organism>
    <name type="scientific">Leishmania infantum</name>
    <dbReference type="NCBI Taxonomy" id="5671"/>
    <lineage>
        <taxon>Eukaryota</taxon>
        <taxon>Discoba</taxon>
        <taxon>Euglenozoa</taxon>
        <taxon>Kinetoplastea</taxon>
        <taxon>Metakinetoplastina</taxon>
        <taxon>Trypanosomatida</taxon>
        <taxon>Trypanosomatidae</taxon>
        <taxon>Leishmaniinae</taxon>
        <taxon>Leishmania</taxon>
    </lineage>
</organism>
<evidence type="ECO:0000250" key="1"/>
<evidence type="ECO:0000256" key="2">
    <source>
        <dbReference type="SAM" id="MobiDB-lite"/>
    </source>
</evidence>
<evidence type="ECO:0000305" key="3"/>
<comment type="function">
    <text>Plays an important role in the elongation step of protein synthesis.</text>
</comment>
<comment type="subunit">
    <text>P1 and P2 exist as dimers at the large ribosomal subunit.</text>
</comment>
<comment type="developmental stage">
    <text>High levels are present in the logarithmic growth phase of the promastigote stage.</text>
</comment>
<comment type="PTM">
    <text evidence="1">Phosphorylated.</text>
</comment>
<comment type="similarity">
    <text evidence="3">Belongs to the eukaryotic ribosomal protein P1/P2 family.</text>
</comment>
<dbReference type="EMBL" id="X68016">
    <property type="protein sequence ID" value="CAA48154.1"/>
    <property type="molecule type" value="Genomic_DNA"/>
</dbReference>
<dbReference type="EMBL" id="X68016">
    <property type="protein sequence ID" value="CAA48153.1"/>
    <property type="molecule type" value="Genomic_DNA"/>
</dbReference>
<dbReference type="eggNOG" id="KOG3449">
    <property type="taxonomic scope" value="Eukaryota"/>
</dbReference>
<dbReference type="GO" id="GO:0022625">
    <property type="term" value="C:cytosolic large ribosomal subunit"/>
    <property type="evidence" value="ECO:0007669"/>
    <property type="project" value="InterPro"/>
</dbReference>
<dbReference type="GO" id="GO:0003735">
    <property type="term" value="F:structural constituent of ribosome"/>
    <property type="evidence" value="ECO:0007669"/>
    <property type="project" value="InterPro"/>
</dbReference>
<dbReference type="GO" id="GO:0002182">
    <property type="term" value="P:cytoplasmic translational elongation"/>
    <property type="evidence" value="ECO:0007669"/>
    <property type="project" value="InterPro"/>
</dbReference>
<dbReference type="CDD" id="cd05833">
    <property type="entry name" value="Ribosomal_P2"/>
    <property type="match status" value="1"/>
</dbReference>
<dbReference type="FunFam" id="1.10.10.1410:FF:000002">
    <property type="entry name" value="60S acidic ribosomal protein P2"/>
    <property type="match status" value="1"/>
</dbReference>
<dbReference type="Gene3D" id="1.10.10.1410">
    <property type="match status" value="1"/>
</dbReference>
<dbReference type="HAMAP" id="MF_01478">
    <property type="entry name" value="Ribosomal_L12_arch"/>
    <property type="match status" value="1"/>
</dbReference>
<dbReference type="InterPro" id="IPR038716">
    <property type="entry name" value="P1/P2_N_sf"/>
</dbReference>
<dbReference type="InterPro" id="IPR027534">
    <property type="entry name" value="Ribosomal_P1/P2"/>
</dbReference>
<dbReference type="InterPro" id="IPR001859">
    <property type="entry name" value="Ribosomal_P1/P2_euk"/>
</dbReference>
<dbReference type="InterPro" id="IPR044076">
    <property type="entry name" value="Ribosomal_P2"/>
</dbReference>
<dbReference type="PANTHER" id="PTHR21141">
    <property type="entry name" value="60S ACIDIC RIBOSOMAL PROTEIN FAMILY MEMBER"/>
    <property type="match status" value="1"/>
</dbReference>
<dbReference type="PANTHER" id="PTHR21141:SF5">
    <property type="entry name" value="LARGE RIBOSOMAL SUBUNIT PROTEIN P2"/>
    <property type="match status" value="1"/>
</dbReference>
<dbReference type="Pfam" id="PF00428">
    <property type="entry name" value="Ribosomal_60s"/>
    <property type="match status" value="1"/>
</dbReference>
<dbReference type="PRINTS" id="PR00456">
    <property type="entry name" value="RIBOSOMALP2"/>
</dbReference>
<reference key="1">
    <citation type="journal article" date="1993" name="J. Biol. Chem.">
        <title>Genomic organization and expression of two independent gene arrays coding for two antigenic acidic ribosomal proteins of Leishmania.</title>
        <authorList>
            <person name="Soto M."/>
            <person name="Requena J.M."/>
            <person name="Garcia M."/>
            <person name="Gomez L.C."/>
            <person name="Navarrete I."/>
            <person name="Alonso C."/>
        </authorList>
    </citation>
    <scope>NUCLEOTIDE SEQUENCE [GENOMIC DNA]</scope>
    <source>
        <strain>MHOM/FR/78/LEM 75</strain>
    </source>
</reference>
<accession>Q06382</accession>
<feature type="chain" id="PRO_0000157658" description="Large ribosomal subunit protein P2-2">
    <location>
        <begin position="1"/>
        <end position="111"/>
    </location>
</feature>
<feature type="region of interest" description="Disordered" evidence="2">
    <location>
        <begin position="86"/>
        <end position="111"/>
    </location>
</feature>
<gene>
    <name type="primary">LIP'</name>
</gene>